<accession>A1EA42</accession>
<feature type="chain" id="PRO_0000276809" description="Large ribosomal subunit protein bL36c">
    <location>
        <begin position="1"/>
        <end position="37"/>
    </location>
</feature>
<reference key="1">
    <citation type="journal article" date="2007" name="Theor. Appl. Genet.">
        <title>Complete chloroplast genome sequences of Hordeum vulgare, Sorghum bicolor and Agrostis stolonifera, and comparative analyses with other grass genomes.</title>
        <authorList>
            <person name="Saski C."/>
            <person name="Lee S.-B."/>
            <person name="Fjellheim S."/>
            <person name="Guda C."/>
            <person name="Jansen R.K."/>
            <person name="Luo H."/>
            <person name="Tomkins J."/>
            <person name="Rognli O.A."/>
            <person name="Daniell H."/>
            <person name="Clarke J.L."/>
        </authorList>
    </citation>
    <scope>NUCLEOTIDE SEQUENCE [LARGE SCALE GENOMIC DNA]</scope>
    <source>
        <strain>cv. Penn A-4</strain>
    </source>
</reference>
<protein>
    <recommendedName>
        <fullName evidence="1">Large ribosomal subunit protein bL36c</fullName>
    </recommendedName>
    <alternativeName>
        <fullName evidence="2">50S ribosomal protein L36, chloroplastic</fullName>
    </alternativeName>
</protein>
<keyword id="KW-0150">Chloroplast</keyword>
<keyword id="KW-0934">Plastid</keyword>
<keyword id="KW-0687">Ribonucleoprotein</keyword>
<keyword id="KW-0689">Ribosomal protein</keyword>
<name>RK36_AGRST</name>
<sequence length="37" mass="4447">MKIRASVRKICTKCRLIRRRGRIRVICSNPKHKQRQG</sequence>
<organism>
    <name type="scientific">Agrostis stolonifera</name>
    <name type="common">Creeping bentgrass</name>
    <dbReference type="NCBI Taxonomy" id="63632"/>
    <lineage>
        <taxon>Eukaryota</taxon>
        <taxon>Viridiplantae</taxon>
        <taxon>Streptophyta</taxon>
        <taxon>Embryophyta</taxon>
        <taxon>Tracheophyta</taxon>
        <taxon>Spermatophyta</taxon>
        <taxon>Magnoliopsida</taxon>
        <taxon>Liliopsida</taxon>
        <taxon>Poales</taxon>
        <taxon>Poaceae</taxon>
        <taxon>BOP clade</taxon>
        <taxon>Pooideae</taxon>
        <taxon>Poodae</taxon>
        <taxon>Poeae</taxon>
        <taxon>Poeae Chloroplast Group 1 (Aveneae type)</taxon>
        <taxon>Agrostidodinae</taxon>
        <taxon>Agrostidinae</taxon>
        <taxon>Agrostis</taxon>
    </lineage>
</organism>
<dbReference type="EMBL" id="EF115543">
    <property type="protein sequence ID" value="ABK79613.1"/>
    <property type="molecule type" value="Genomic_DNA"/>
</dbReference>
<dbReference type="RefSeq" id="YP_874770.1">
    <property type="nucleotide sequence ID" value="NC_008591.1"/>
</dbReference>
<dbReference type="SMR" id="A1EA42"/>
<dbReference type="GeneID" id="4525015"/>
<dbReference type="GO" id="GO:0009507">
    <property type="term" value="C:chloroplast"/>
    <property type="evidence" value="ECO:0007669"/>
    <property type="project" value="UniProtKB-SubCell"/>
</dbReference>
<dbReference type="GO" id="GO:1990904">
    <property type="term" value="C:ribonucleoprotein complex"/>
    <property type="evidence" value="ECO:0007669"/>
    <property type="project" value="UniProtKB-KW"/>
</dbReference>
<dbReference type="GO" id="GO:0005840">
    <property type="term" value="C:ribosome"/>
    <property type="evidence" value="ECO:0007669"/>
    <property type="project" value="UniProtKB-KW"/>
</dbReference>
<dbReference type="GO" id="GO:0003735">
    <property type="term" value="F:structural constituent of ribosome"/>
    <property type="evidence" value="ECO:0007669"/>
    <property type="project" value="InterPro"/>
</dbReference>
<dbReference type="GO" id="GO:0006412">
    <property type="term" value="P:translation"/>
    <property type="evidence" value="ECO:0007669"/>
    <property type="project" value="UniProtKB-UniRule"/>
</dbReference>
<dbReference type="HAMAP" id="MF_00251">
    <property type="entry name" value="Ribosomal_bL36"/>
    <property type="match status" value="1"/>
</dbReference>
<dbReference type="InterPro" id="IPR000473">
    <property type="entry name" value="Ribosomal_bL36"/>
</dbReference>
<dbReference type="InterPro" id="IPR035977">
    <property type="entry name" value="Ribosomal_bL36_sp"/>
</dbReference>
<dbReference type="NCBIfam" id="TIGR01022">
    <property type="entry name" value="rpmJ_bact"/>
    <property type="match status" value="1"/>
</dbReference>
<dbReference type="PANTHER" id="PTHR42888">
    <property type="entry name" value="50S RIBOSOMAL PROTEIN L36, CHLOROPLASTIC"/>
    <property type="match status" value="1"/>
</dbReference>
<dbReference type="PANTHER" id="PTHR42888:SF1">
    <property type="entry name" value="LARGE RIBOSOMAL SUBUNIT PROTEIN BL36C"/>
    <property type="match status" value="1"/>
</dbReference>
<dbReference type="Pfam" id="PF00444">
    <property type="entry name" value="Ribosomal_L36"/>
    <property type="match status" value="1"/>
</dbReference>
<dbReference type="SUPFAM" id="SSF57840">
    <property type="entry name" value="Ribosomal protein L36"/>
    <property type="match status" value="1"/>
</dbReference>
<dbReference type="PROSITE" id="PS00828">
    <property type="entry name" value="RIBOSOMAL_L36"/>
    <property type="match status" value="1"/>
</dbReference>
<proteinExistence type="inferred from homology"/>
<geneLocation type="chloroplast"/>
<comment type="subcellular location">
    <subcellularLocation>
        <location>Plastid</location>
        <location>Chloroplast</location>
    </subcellularLocation>
</comment>
<comment type="similarity">
    <text evidence="1">Belongs to the bacterial ribosomal protein bL36 family.</text>
</comment>
<gene>
    <name evidence="1" type="primary">rpl36</name>
</gene>
<evidence type="ECO:0000255" key="1">
    <source>
        <dbReference type="HAMAP-Rule" id="MF_00251"/>
    </source>
</evidence>
<evidence type="ECO:0000305" key="2"/>